<protein>
    <recommendedName>
        <fullName evidence="1">Ribosome maturation factor RimM</fullName>
    </recommendedName>
</protein>
<feature type="chain" id="PRO_0000321758" description="Ribosome maturation factor RimM">
    <location>
        <begin position="1"/>
        <end position="176"/>
    </location>
</feature>
<feature type="domain" description="PRC barrel" evidence="1">
    <location>
        <begin position="97"/>
        <end position="176"/>
    </location>
</feature>
<accession>A4Y4L4</accession>
<keyword id="KW-0143">Chaperone</keyword>
<keyword id="KW-0963">Cytoplasm</keyword>
<keyword id="KW-0690">Ribosome biogenesis</keyword>
<keyword id="KW-0698">rRNA processing</keyword>
<organism>
    <name type="scientific">Shewanella putrefaciens (strain CN-32 / ATCC BAA-453)</name>
    <dbReference type="NCBI Taxonomy" id="319224"/>
    <lineage>
        <taxon>Bacteria</taxon>
        <taxon>Pseudomonadati</taxon>
        <taxon>Pseudomonadota</taxon>
        <taxon>Gammaproteobacteria</taxon>
        <taxon>Alteromonadales</taxon>
        <taxon>Shewanellaceae</taxon>
        <taxon>Shewanella</taxon>
    </lineage>
</organism>
<evidence type="ECO:0000255" key="1">
    <source>
        <dbReference type="HAMAP-Rule" id="MF_00014"/>
    </source>
</evidence>
<gene>
    <name evidence="1" type="primary">rimM</name>
    <name type="ordered locus">Sputcn32_1169</name>
</gene>
<comment type="function">
    <text evidence="1">An accessory protein needed during the final step in the assembly of 30S ribosomal subunit, possibly for assembly of the head region. Essential for efficient processing of 16S rRNA. May be needed both before and after RbfA during the maturation of 16S rRNA. It has affinity for free ribosomal 30S subunits but not for 70S ribosomes.</text>
</comment>
<comment type="subunit">
    <text evidence="1">Binds ribosomal protein uS19.</text>
</comment>
<comment type="subcellular location">
    <subcellularLocation>
        <location evidence="1">Cytoplasm</location>
    </subcellularLocation>
</comment>
<comment type="domain">
    <text evidence="1">The PRC barrel domain binds ribosomal protein uS19.</text>
</comment>
<comment type="similarity">
    <text evidence="1">Belongs to the RimM family.</text>
</comment>
<name>RIMM_SHEPC</name>
<reference key="1">
    <citation type="submission" date="2007-04" db="EMBL/GenBank/DDBJ databases">
        <title>Complete sequence of Shewanella putrefaciens CN-32.</title>
        <authorList>
            <consortium name="US DOE Joint Genome Institute"/>
            <person name="Copeland A."/>
            <person name="Lucas S."/>
            <person name="Lapidus A."/>
            <person name="Barry K."/>
            <person name="Detter J.C."/>
            <person name="Glavina del Rio T."/>
            <person name="Hammon N."/>
            <person name="Israni S."/>
            <person name="Dalin E."/>
            <person name="Tice H."/>
            <person name="Pitluck S."/>
            <person name="Chain P."/>
            <person name="Malfatti S."/>
            <person name="Shin M."/>
            <person name="Vergez L."/>
            <person name="Schmutz J."/>
            <person name="Larimer F."/>
            <person name="Land M."/>
            <person name="Hauser L."/>
            <person name="Kyrpides N."/>
            <person name="Mikhailova N."/>
            <person name="Romine M.F."/>
            <person name="Fredrickson J."/>
            <person name="Tiedje J."/>
            <person name="Richardson P."/>
        </authorList>
    </citation>
    <scope>NUCLEOTIDE SEQUENCE [LARGE SCALE GENOMIC DNA]</scope>
    <source>
        <strain>CN-32 / ATCC BAA-453</strain>
    </source>
</reference>
<dbReference type="EMBL" id="CP000681">
    <property type="protein sequence ID" value="ABP74897.1"/>
    <property type="molecule type" value="Genomic_DNA"/>
</dbReference>
<dbReference type="SMR" id="A4Y4L4"/>
<dbReference type="STRING" id="319224.Sputcn32_1169"/>
<dbReference type="KEGG" id="spc:Sputcn32_1169"/>
<dbReference type="eggNOG" id="COG0806">
    <property type="taxonomic scope" value="Bacteria"/>
</dbReference>
<dbReference type="HOGENOM" id="CLU_077636_1_0_6"/>
<dbReference type="GO" id="GO:0005737">
    <property type="term" value="C:cytoplasm"/>
    <property type="evidence" value="ECO:0007669"/>
    <property type="project" value="UniProtKB-SubCell"/>
</dbReference>
<dbReference type="GO" id="GO:0005840">
    <property type="term" value="C:ribosome"/>
    <property type="evidence" value="ECO:0007669"/>
    <property type="project" value="InterPro"/>
</dbReference>
<dbReference type="GO" id="GO:0043022">
    <property type="term" value="F:ribosome binding"/>
    <property type="evidence" value="ECO:0007669"/>
    <property type="project" value="InterPro"/>
</dbReference>
<dbReference type="GO" id="GO:0042274">
    <property type="term" value="P:ribosomal small subunit biogenesis"/>
    <property type="evidence" value="ECO:0007669"/>
    <property type="project" value="UniProtKB-UniRule"/>
</dbReference>
<dbReference type="GO" id="GO:0006364">
    <property type="term" value="P:rRNA processing"/>
    <property type="evidence" value="ECO:0007669"/>
    <property type="project" value="UniProtKB-UniRule"/>
</dbReference>
<dbReference type="Gene3D" id="2.30.30.240">
    <property type="entry name" value="PRC-barrel domain"/>
    <property type="match status" value="1"/>
</dbReference>
<dbReference type="Gene3D" id="2.40.30.60">
    <property type="entry name" value="RimM"/>
    <property type="match status" value="1"/>
</dbReference>
<dbReference type="HAMAP" id="MF_00014">
    <property type="entry name" value="Ribosome_mat_RimM"/>
    <property type="match status" value="1"/>
</dbReference>
<dbReference type="InterPro" id="IPR011033">
    <property type="entry name" value="PRC_barrel-like_sf"/>
</dbReference>
<dbReference type="InterPro" id="IPR056792">
    <property type="entry name" value="PRC_RimM"/>
</dbReference>
<dbReference type="InterPro" id="IPR011961">
    <property type="entry name" value="RimM"/>
</dbReference>
<dbReference type="InterPro" id="IPR002676">
    <property type="entry name" value="RimM_N"/>
</dbReference>
<dbReference type="InterPro" id="IPR036976">
    <property type="entry name" value="RimM_N_sf"/>
</dbReference>
<dbReference type="InterPro" id="IPR009000">
    <property type="entry name" value="Transl_B-barrel_sf"/>
</dbReference>
<dbReference type="NCBIfam" id="TIGR02273">
    <property type="entry name" value="16S_RimM"/>
    <property type="match status" value="1"/>
</dbReference>
<dbReference type="PANTHER" id="PTHR33692">
    <property type="entry name" value="RIBOSOME MATURATION FACTOR RIMM"/>
    <property type="match status" value="1"/>
</dbReference>
<dbReference type="PANTHER" id="PTHR33692:SF1">
    <property type="entry name" value="RIBOSOME MATURATION FACTOR RIMM"/>
    <property type="match status" value="1"/>
</dbReference>
<dbReference type="Pfam" id="PF24986">
    <property type="entry name" value="PRC_RimM"/>
    <property type="match status" value="1"/>
</dbReference>
<dbReference type="Pfam" id="PF01782">
    <property type="entry name" value="RimM"/>
    <property type="match status" value="1"/>
</dbReference>
<dbReference type="SUPFAM" id="SSF50346">
    <property type="entry name" value="PRC-barrel domain"/>
    <property type="match status" value="1"/>
</dbReference>
<dbReference type="SUPFAM" id="SSF50447">
    <property type="entry name" value="Translation proteins"/>
    <property type="match status" value="1"/>
</dbReference>
<sequence length="176" mass="19962">MSSNQQPVVLGKLGSCHGIKGWLRITAYTDSVEGIFDYSPWLIKENGEWREVKVTQWRYQGKAVVAELEGVNTREQAQMLTNCEIAILPEQMDALPEDEFYWRDLIGCEVVNTTGYNMGIVDQIVETGSNDVLLVKANAKDSFGKVERMIPFVPEQFIKTVDVQGKQILVDWDPDF</sequence>
<proteinExistence type="inferred from homology"/>